<organism>
    <name type="scientific">Chlorobium phaeovibrioides (strain DSM 265 / 1930)</name>
    <name type="common">Prosthecochloris vibrioformis (strain DSM 265)</name>
    <dbReference type="NCBI Taxonomy" id="290318"/>
    <lineage>
        <taxon>Bacteria</taxon>
        <taxon>Pseudomonadati</taxon>
        <taxon>Chlorobiota</taxon>
        <taxon>Chlorobiia</taxon>
        <taxon>Chlorobiales</taxon>
        <taxon>Chlorobiaceae</taxon>
        <taxon>Chlorobium/Pelodictyon group</taxon>
        <taxon>Chlorobium</taxon>
    </lineage>
</organism>
<proteinExistence type="inferred from homology"/>
<name>DNLJ_CHLPM</name>
<feature type="chain" id="PRO_0000340366" description="DNA ligase">
    <location>
        <begin position="1"/>
        <end position="674"/>
    </location>
</feature>
<feature type="domain" description="BRCT" evidence="1">
    <location>
        <begin position="598"/>
        <end position="674"/>
    </location>
</feature>
<feature type="active site" description="N6-AMP-lysine intermediate" evidence="1">
    <location>
        <position position="120"/>
    </location>
</feature>
<feature type="binding site" evidence="1">
    <location>
        <begin position="35"/>
        <end position="39"/>
    </location>
    <ligand>
        <name>NAD(+)</name>
        <dbReference type="ChEBI" id="CHEBI:57540"/>
    </ligand>
</feature>
<feature type="binding site" evidence="1">
    <location>
        <begin position="84"/>
        <end position="85"/>
    </location>
    <ligand>
        <name>NAD(+)</name>
        <dbReference type="ChEBI" id="CHEBI:57540"/>
    </ligand>
</feature>
<feature type="binding site" evidence="1">
    <location>
        <position position="118"/>
    </location>
    <ligand>
        <name>NAD(+)</name>
        <dbReference type="ChEBI" id="CHEBI:57540"/>
    </ligand>
</feature>
<feature type="binding site" evidence="1">
    <location>
        <position position="141"/>
    </location>
    <ligand>
        <name>NAD(+)</name>
        <dbReference type="ChEBI" id="CHEBI:57540"/>
    </ligand>
</feature>
<feature type="binding site" evidence="1">
    <location>
        <position position="184"/>
    </location>
    <ligand>
        <name>NAD(+)</name>
        <dbReference type="ChEBI" id="CHEBI:57540"/>
    </ligand>
</feature>
<feature type="binding site" evidence="1">
    <location>
        <position position="297"/>
    </location>
    <ligand>
        <name>NAD(+)</name>
        <dbReference type="ChEBI" id="CHEBI:57540"/>
    </ligand>
</feature>
<feature type="binding site" evidence="1">
    <location>
        <position position="321"/>
    </location>
    <ligand>
        <name>NAD(+)</name>
        <dbReference type="ChEBI" id="CHEBI:57540"/>
    </ligand>
</feature>
<feature type="binding site" evidence="1">
    <location>
        <position position="415"/>
    </location>
    <ligand>
        <name>Zn(2+)</name>
        <dbReference type="ChEBI" id="CHEBI:29105"/>
    </ligand>
</feature>
<feature type="binding site" evidence="1">
    <location>
        <position position="418"/>
    </location>
    <ligand>
        <name>Zn(2+)</name>
        <dbReference type="ChEBI" id="CHEBI:29105"/>
    </ligand>
</feature>
<feature type="binding site" evidence="1">
    <location>
        <position position="433"/>
    </location>
    <ligand>
        <name>Zn(2+)</name>
        <dbReference type="ChEBI" id="CHEBI:29105"/>
    </ligand>
</feature>
<feature type="binding site" evidence="1">
    <location>
        <position position="439"/>
    </location>
    <ligand>
        <name>Zn(2+)</name>
        <dbReference type="ChEBI" id="CHEBI:29105"/>
    </ligand>
</feature>
<gene>
    <name evidence="1" type="primary">ligA</name>
    <name type="ordered locus">Cvib_1483</name>
</gene>
<sequence length="674" mass="74840">MVGIDALRSEAERLRSDIERHNHLYYVEAKPELSDYDFDLLLDRLVQLEREHPELVTPDSPTQRVGGTITKEFPSVEHREPMLSLANTYSIGEVEEFVGRLNRLLEAEGAQGRDTVAELKFDGVAVSLLYRDGLLIRGATRGDGRRGDDITVNLKTVPSIPLRLGEFDGPFSAGEGREVEVRGEVLMRKEDFEALNDTRPEEDRFANPRNATAGTLKLQDSREVARRSLWFVAYYVSGLHDEDTRHVDRLKLLETAGFSTGNQYRLCHGIEEIEAFMQFWDEGRRALPYETDGVVVKLNDVRQWRLLGATSKSPRWAIAYKYPASRATTLLRDIVFQVGRLGTITPVAELEPVHIAGSTVARSTLHNFDEMRRLGVMPGDRVVIEKSGEVIPKVISVLLEERPPGLSAKELPTHCPDCGTPLVQPEGEVSWYCPNEEGCGAQIRGRVLHFASRNAMDIENLGESLVEQLVAKGMVKDPGDLYFLREEELAGLERMGEKSARNLLQGLLKSREQSFARLLFGLGIRHVGRATARELAKACSSIEVLKEASFEELSEVPDIGPVIARSIRDWFLKPAIPSLIEKLRRAGLPLAAEEPGPLVNTNFEGLTVVFTGGLQRHDRSSAGELVVARGGIVVSTVSKKTGLVVAGKEAGSKLEKARKLGLRIITEDEFDALL</sequence>
<keyword id="KW-0227">DNA damage</keyword>
<keyword id="KW-0234">DNA repair</keyword>
<keyword id="KW-0235">DNA replication</keyword>
<keyword id="KW-0436">Ligase</keyword>
<keyword id="KW-0460">Magnesium</keyword>
<keyword id="KW-0464">Manganese</keyword>
<keyword id="KW-0479">Metal-binding</keyword>
<keyword id="KW-0520">NAD</keyword>
<keyword id="KW-0862">Zinc</keyword>
<reference key="1">
    <citation type="submission" date="2007-03" db="EMBL/GenBank/DDBJ databases">
        <title>Complete sequence of Prosthecochloris vibrioformis DSM 265.</title>
        <authorList>
            <consortium name="US DOE Joint Genome Institute"/>
            <person name="Copeland A."/>
            <person name="Lucas S."/>
            <person name="Lapidus A."/>
            <person name="Barry K."/>
            <person name="Detter J.C."/>
            <person name="Glavina del Rio T."/>
            <person name="Hammon N."/>
            <person name="Israni S."/>
            <person name="Pitluck S."/>
            <person name="Schmutz J."/>
            <person name="Larimer F."/>
            <person name="Land M."/>
            <person name="Hauser L."/>
            <person name="Mikhailova N."/>
            <person name="Li T."/>
            <person name="Overmann J."/>
            <person name="Schuster S.C."/>
            <person name="Bryant D.A."/>
            <person name="Richardson P."/>
        </authorList>
    </citation>
    <scope>NUCLEOTIDE SEQUENCE [LARGE SCALE GENOMIC DNA]</scope>
    <source>
        <strain>DSM 265 / 1930</strain>
    </source>
</reference>
<dbReference type="EC" id="6.5.1.2" evidence="1"/>
<dbReference type="EMBL" id="CP000607">
    <property type="protein sequence ID" value="ABP37494.1"/>
    <property type="molecule type" value="Genomic_DNA"/>
</dbReference>
<dbReference type="SMR" id="A4SG85"/>
<dbReference type="STRING" id="290318.Cvib_1483"/>
<dbReference type="KEGG" id="pvi:Cvib_1483"/>
<dbReference type="eggNOG" id="COG0272">
    <property type="taxonomic scope" value="Bacteria"/>
</dbReference>
<dbReference type="HOGENOM" id="CLU_007764_2_1_10"/>
<dbReference type="OrthoDB" id="9759736at2"/>
<dbReference type="GO" id="GO:0005829">
    <property type="term" value="C:cytosol"/>
    <property type="evidence" value="ECO:0007669"/>
    <property type="project" value="TreeGrafter"/>
</dbReference>
<dbReference type="GO" id="GO:0003677">
    <property type="term" value="F:DNA binding"/>
    <property type="evidence" value="ECO:0007669"/>
    <property type="project" value="InterPro"/>
</dbReference>
<dbReference type="GO" id="GO:0003911">
    <property type="term" value="F:DNA ligase (NAD+) activity"/>
    <property type="evidence" value="ECO:0007669"/>
    <property type="project" value="UniProtKB-UniRule"/>
</dbReference>
<dbReference type="GO" id="GO:0046872">
    <property type="term" value="F:metal ion binding"/>
    <property type="evidence" value="ECO:0007669"/>
    <property type="project" value="UniProtKB-KW"/>
</dbReference>
<dbReference type="GO" id="GO:0006281">
    <property type="term" value="P:DNA repair"/>
    <property type="evidence" value="ECO:0007669"/>
    <property type="project" value="UniProtKB-KW"/>
</dbReference>
<dbReference type="GO" id="GO:0006260">
    <property type="term" value="P:DNA replication"/>
    <property type="evidence" value="ECO:0007669"/>
    <property type="project" value="UniProtKB-KW"/>
</dbReference>
<dbReference type="CDD" id="cd17748">
    <property type="entry name" value="BRCT_DNA_ligase_like"/>
    <property type="match status" value="1"/>
</dbReference>
<dbReference type="CDD" id="cd00114">
    <property type="entry name" value="LIGANc"/>
    <property type="match status" value="1"/>
</dbReference>
<dbReference type="FunFam" id="1.10.150.20:FF:000006">
    <property type="entry name" value="DNA ligase"/>
    <property type="match status" value="1"/>
</dbReference>
<dbReference type="FunFam" id="1.10.150.20:FF:000007">
    <property type="entry name" value="DNA ligase"/>
    <property type="match status" value="1"/>
</dbReference>
<dbReference type="FunFam" id="2.40.50.140:FF:000012">
    <property type="entry name" value="DNA ligase"/>
    <property type="match status" value="1"/>
</dbReference>
<dbReference type="Gene3D" id="6.20.10.30">
    <property type="match status" value="1"/>
</dbReference>
<dbReference type="Gene3D" id="1.10.150.20">
    <property type="entry name" value="5' to 3' exonuclease, C-terminal subdomain"/>
    <property type="match status" value="2"/>
</dbReference>
<dbReference type="Gene3D" id="3.40.50.10190">
    <property type="entry name" value="BRCT domain"/>
    <property type="match status" value="1"/>
</dbReference>
<dbReference type="Gene3D" id="3.30.470.30">
    <property type="entry name" value="DNA ligase/mRNA capping enzyme"/>
    <property type="match status" value="1"/>
</dbReference>
<dbReference type="Gene3D" id="1.10.287.610">
    <property type="entry name" value="Helix hairpin bin"/>
    <property type="match status" value="1"/>
</dbReference>
<dbReference type="Gene3D" id="2.40.50.140">
    <property type="entry name" value="Nucleic acid-binding proteins"/>
    <property type="match status" value="1"/>
</dbReference>
<dbReference type="HAMAP" id="MF_01588">
    <property type="entry name" value="DNA_ligase_A"/>
    <property type="match status" value="1"/>
</dbReference>
<dbReference type="InterPro" id="IPR001357">
    <property type="entry name" value="BRCT_dom"/>
</dbReference>
<dbReference type="InterPro" id="IPR036420">
    <property type="entry name" value="BRCT_dom_sf"/>
</dbReference>
<dbReference type="InterPro" id="IPR041663">
    <property type="entry name" value="DisA/LigA_HHH"/>
</dbReference>
<dbReference type="InterPro" id="IPR001679">
    <property type="entry name" value="DNA_ligase"/>
</dbReference>
<dbReference type="InterPro" id="IPR018239">
    <property type="entry name" value="DNA_ligase_AS"/>
</dbReference>
<dbReference type="InterPro" id="IPR013839">
    <property type="entry name" value="DNAligase_adenylation"/>
</dbReference>
<dbReference type="InterPro" id="IPR013840">
    <property type="entry name" value="DNAligase_N"/>
</dbReference>
<dbReference type="InterPro" id="IPR003583">
    <property type="entry name" value="Hlx-hairpin-Hlx_DNA-bd_motif"/>
</dbReference>
<dbReference type="InterPro" id="IPR012340">
    <property type="entry name" value="NA-bd_OB-fold"/>
</dbReference>
<dbReference type="InterPro" id="IPR004150">
    <property type="entry name" value="NAD_DNA_ligase_OB"/>
</dbReference>
<dbReference type="InterPro" id="IPR010994">
    <property type="entry name" value="RuvA_2-like"/>
</dbReference>
<dbReference type="InterPro" id="IPR004149">
    <property type="entry name" value="Znf_DNAligase_C4"/>
</dbReference>
<dbReference type="NCBIfam" id="TIGR00575">
    <property type="entry name" value="dnlj"/>
    <property type="match status" value="1"/>
</dbReference>
<dbReference type="NCBIfam" id="NF005932">
    <property type="entry name" value="PRK07956.1"/>
    <property type="match status" value="1"/>
</dbReference>
<dbReference type="PANTHER" id="PTHR23389">
    <property type="entry name" value="CHROMOSOME TRANSMISSION FIDELITY FACTOR 18"/>
    <property type="match status" value="1"/>
</dbReference>
<dbReference type="PANTHER" id="PTHR23389:SF9">
    <property type="entry name" value="DNA LIGASE"/>
    <property type="match status" value="1"/>
</dbReference>
<dbReference type="Pfam" id="PF00533">
    <property type="entry name" value="BRCT"/>
    <property type="match status" value="1"/>
</dbReference>
<dbReference type="Pfam" id="PF01653">
    <property type="entry name" value="DNA_ligase_aden"/>
    <property type="match status" value="1"/>
</dbReference>
<dbReference type="Pfam" id="PF03120">
    <property type="entry name" value="DNA_ligase_OB"/>
    <property type="match status" value="1"/>
</dbReference>
<dbReference type="Pfam" id="PF03119">
    <property type="entry name" value="DNA_ligase_ZBD"/>
    <property type="match status" value="1"/>
</dbReference>
<dbReference type="Pfam" id="PF12826">
    <property type="entry name" value="HHH_2"/>
    <property type="match status" value="1"/>
</dbReference>
<dbReference type="PIRSF" id="PIRSF001604">
    <property type="entry name" value="LigA"/>
    <property type="match status" value="1"/>
</dbReference>
<dbReference type="SMART" id="SM00292">
    <property type="entry name" value="BRCT"/>
    <property type="match status" value="1"/>
</dbReference>
<dbReference type="SMART" id="SM00278">
    <property type="entry name" value="HhH1"/>
    <property type="match status" value="3"/>
</dbReference>
<dbReference type="SMART" id="SM00532">
    <property type="entry name" value="LIGANc"/>
    <property type="match status" value="1"/>
</dbReference>
<dbReference type="SUPFAM" id="SSF52113">
    <property type="entry name" value="BRCT domain"/>
    <property type="match status" value="1"/>
</dbReference>
<dbReference type="SUPFAM" id="SSF56091">
    <property type="entry name" value="DNA ligase/mRNA capping enzyme, catalytic domain"/>
    <property type="match status" value="1"/>
</dbReference>
<dbReference type="SUPFAM" id="SSF50249">
    <property type="entry name" value="Nucleic acid-binding proteins"/>
    <property type="match status" value="1"/>
</dbReference>
<dbReference type="SUPFAM" id="SSF47781">
    <property type="entry name" value="RuvA domain 2-like"/>
    <property type="match status" value="1"/>
</dbReference>
<dbReference type="PROSITE" id="PS50172">
    <property type="entry name" value="BRCT"/>
    <property type="match status" value="1"/>
</dbReference>
<dbReference type="PROSITE" id="PS01055">
    <property type="entry name" value="DNA_LIGASE_N1"/>
    <property type="match status" value="1"/>
</dbReference>
<comment type="function">
    <text evidence="1">DNA ligase that catalyzes the formation of phosphodiester linkages between 5'-phosphoryl and 3'-hydroxyl groups in double-stranded DNA using NAD as a coenzyme and as the energy source for the reaction. It is essential for DNA replication and repair of damaged DNA.</text>
</comment>
<comment type="catalytic activity">
    <reaction evidence="1">
        <text>NAD(+) + (deoxyribonucleotide)n-3'-hydroxyl + 5'-phospho-(deoxyribonucleotide)m = (deoxyribonucleotide)n+m + AMP + beta-nicotinamide D-nucleotide.</text>
        <dbReference type="EC" id="6.5.1.2"/>
    </reaction>
</comment>
<comment type="cofactor">
    <cofactor evidence="1">
        <name>Mg(2+)</name>
        <dbReference type="ChEBI" id="CHEBI:18420"/>
    </cofactor>
    <cofactor evidence="1">
        <name>Mn(2+)</name>
        <dbReference type="ChEBI" id="CHEBI:29035"/>
    </cofactor>
</comment>
<comment type="similarity">
    <text evidence="1">Belongs to the NAD-dependent DNA ligase family. LigA subfamily.</text>
</comment>
<evidence type="ECO:0000255" key="1">
    <source>
        <dbReference type="HAMAP-Rule" id="MF_01588"/>
    </source>
</evidence>
<protein>
    <recommendedName>
        <fullName evidence="1">DNA ligase</fullName>
        <ecNumber evidence="1">6.5.1.2</ecNumber>
    </recommendedName>
    <alternativeName>
        <fullName evidence="1">Polydeoxyribonucleotide synthase [NAD(+)]</fullName>
    </alternativeName>
</protein>
<accession>A4SG85</accession>